<organism>
    <name type="scientific">Citrobacter koseri (strain ATCC BAA-895 / CDC 4225-83 / SGSC4696)</name>
    <dbReference type="NCBI Taxonomy" id="290338"/>
    <lineage>
        <taxon>Bacteria</taxon>
        <taxon>Pseudomonadati</taxon>
        <taxon>Pseudomonadota</taxon>
        <taxon>Gammaproteobacteria</taxon>
        <taxon>Enterobacterales</taxon>
        <taxon>Enterobacteriaceae</taxon>
        <taxon>Citrobacter</taxon>
    </lineage>
</organism>
<keyword id="KW-0169">Cobalamin biosynthesis</keyword>
<keyword id="KW-0489">Methyltransferase</keyword>
<keyword id="KW-1185">Reference proteome</keyword>
<keyword id="KW-0949">S-adenosyl-L-methionine</keyword>
<keyword id="KW-0808">Transferase</keyword>
<protein>
    <recommendedName>
        <fullName evidence="1">Cobalt-precorrin-5B C(1)-methyltransferase</fullName>
        <ecNumber evidence="1">2.1.1.195</ecNumber>
    </recommendedName>
    <alternativeName>
        <fullName evidence="1">Cobalt-precorrin-6A synthase</fullName>
    </alternativeName>
</protein>
<evidence type="ECO:0000255" key="1">
    <source>
        <dbReference type="HAMAP-Rule" id="MF_00787"/>
    </source>
</evidence>
<accession>A8AEP5</accession>
<comment type="function">
    <text evidence="1">Catalyzes the methylation of C-1 in cobalt-precorrin-5B to form cobalt-precorrin-6A.</text>
</comment>
<comment type="catalytic activity">
    <reaction evidence="1">
        <text>Co-precorrin-5B + S-adenosyl-L-methionine = Co-precorrin-6A + S-adenosyl-L-homocysteine</text>
        <dbReference type="Rhea" id="RHEA:26285"/>
        <dbReference type="ChEBI" id="CHEBI:57856"/>
        <dbReference type="ChEBI" id="CHEBI:59789"/>
        <dbReference type="ChEBI" id="CHEBI:60063"/>
        <dbReference type="ChEBI" id="CHEBI:60064"/>
        <dbReference type="EC" id="2.1.1.195"/>
    </reaction>
</comment>
<comment type="pathway">
    <text evidence="1">Cofactor biosynthesis; adenosylcobalamin biosynthesis; cob(II)yrinate a,c-diamide from sirohydrochlorin (anaerobic route): step 6/10.</text>
</comment>
<comment type="similarity">
    <text evidence="1">Belongs to the CbiD family.</text>
</comment>
<sequence length="379" mass="41211">MSDQSFDAPVWHNGKALRKGYTTGSCATAAAKVAALMVLRQHLIHQVSIVTPSGVTLCLNVESPHIEGRQAIAAIRKDGGDDVDATHGMLIFARVTLNDSGEITLQGGEGVGTVTRKGIGLPVGSAAINRTPRHTIESVVREAIGPARGADIEIFAPEGEERAQKTYNARLGILGGISIIGTTGIVTPMSEESWKRSLSLELEIKRAAGLERVVLVPGNHGERFVREQMGIDTQVVVTMSNFVGYMIEEAVRLGYRHIVLIGHPGKLIKIAAGIFHTHSHIADARMETLVAHLALLGAPLELLTRVSDCDTTEAAMEHIEAYGFQHIYNHLAQRICMRVMQMLRFTKTPPTCDAIMFSFDNQILGSNRPIEEIVEEMQC</sequence>
<feature type="chain" id="PRO_1000046852" description="Cobalt-precorrin-5B C(1)-methyltransferase">
    <location>
        <begin position="1"/>
        <end position="379"/>
    </location>
</feature>
<gene>
    <name evidence="1" type="primary">cbiD</name>
    <name type="ordered locus">CKO_00806</name>
</gene>
<name>CBID_CITK8</name>
<dbReference type="EC" id="2.1.1.195" evidence="1"/>
<dbReference type="EMBL" id="CP000822">
    <property type="protein sequence ID" value="ABV11958.1"/>
    <property type="molecule type" value="Genomic_DNA"/>
</dbReference>
<dbReference type="RefSeq" id="WP_012131779.1">
    <property type="nucleotide sequence ID" value="NC_009792.1"/>
</dbReference>
<dbReference type="SMR" id="A8AEP5"/>
<dbReference type="STRING" id="290338.CKO_00806"/>
<dbReference type="GeneID" id="45135003"/>
<dbReference type="KEGG" id="cko:CKO_00806"/>
<dbReference type="HOGENOM" id="CLU_041273_1_0_6"/>
<dbReference type="OrthoDB" id="6439987at2"/>
<dbReference type="UniPathway" id="UPA00148">
    <property type="reaction ID" value="UER00227"/>
</dbReference>
<dbReference type="Proteomes" id="UP000008148">
    <property type="component" value="Chromosome"/>
</dbReference>
<dbReference type="GO" id="GO:0043780">
    <property type="term" value="F:cobalt-precorrin-5B C1-methyltransferase activity"/>
    <property type="evidence" value="ECO:0007669"/>
    <property type="project" value="RHEA"/>
</dbReference>
<dbReference type="GO" id="GO:0019251">
    <property type="term" value="P:anaerobic cobalamin biosynthetic process"/>
    <property type="evidence" value="ECO:0007669"/>
    <property type="project" value="UniProtKB-UniRule"/>
</dbReference>
<dbReference type="GO" id="GO:0032259">
    <property type="term" value="P:methylation"/>
    <property type="evidence" value="ECO:0007669"/>
    <property type="project" value="UniProtKB-KW"/>
</dbReference>
<dbReference type="Gene3D" id="3.30.2110.10">
    <property type="entry name" value="CbiD-like"/>
    <property type="match status" value="1"/>
</dbReference>
<dbReference type="HAMAP" id="MF_00787">
    <property type="entry name" value="CbiD"/>
    <property type="match status" value="1"/>
</dbReference>
<dbReference type="InterPro" id="IPR002748">
    <property type="entry name" value="CbiD"/>
</dbReference>
<dbReference type="InterPro" id="IPR036074">
    <property type="entry name" value="CbiD_sf"/>
</dbReference>
<dbReference type="NCBIfam" id="TIGR00312">
    <property type="entry name" value="cbiD"/>
    <property type="match status" value="1"/>
</dbReference>
<dbReference type="PANTHER" id="PTHR35863">
    <property type="entry name" value="COBALT-PRECORRIN-5B C(1)-METHYLTRANSFERASE"/>
    <property type="match status" value="1"/>
</dbReference>
<dbReference type="PANTHER" id="PTHR35863:SF1">
    <property type="entry name" value="COBALT-PRECORRIN-5B C(1)-METHYLTRANSFERASE"/>
    <property type="match status" value="1"/>
</dbReference>
<dbReference type="Pfam" id="PF01888">
    <property type="entry name" value="CbiD"/>
    <property type="match status" value="1"/>
</dbReference>
<dbReference type="PIRSF" id="PIRSF026782">
    <property type="entry name" value="CbiD"/>
    <property type="match status" value="1"/>
</dbReference>
<dbReference type="SUPFAM" id="SSF111342">
    <property type="entry name" value="CbiD-like"/>
    <property type="match status" value="1"/>
</dbReference>
<proteinExistence type="inferred from homology"/>
<reference key="1">
    <citation type="submission" date="2007-08" db="EMBL/GenBank/DDBJ databases">
        <authorList>
            <consortium name="The Citrobacter koseri Genome Sequencing Project"/>
            <person name="McClelland M."/>
            <person name="Sanderson E.K."/>
            <person name="Porwollik S."/>
            <person name="Spieth J."/>
            <person name="Clifton W.S."/>
            <person name="Latreille P."/>
            <person name="Courtney L."/>
            <person name="Wang C."/>
            <person name="Pepin K."/>
            <person name="Bhonagiri V."/>
            <person name="Nash W."/>
            <person name="Johnson M."/>
            <person name="Thiruvilangam P."/>
            <person name="Wilson R."/>
        </authorList>
    </citation>
    <scope>NUCLEOTIDE SEQUENCE [LARGE SCALE GENOMIC DNA]</scope>
    <source>
        <strain>ATCC BAA-895 / CDC 4225-83 / SGSC4696</strain>
    </source>
</reference>